<sequence>MSSPEPQGEPQPVSGSPSEFLRNIVGKRVKVRIGSGVDYTGLLTCLDGYMNVALEQAEEWAGEVKTAAYGDCFLRGNNVLYISALEDL</sequence>
<proteinExistence type="inferred from homology"/>
<comment type="function">
    <text evidence="1">Component of LSm protein complexes, which are involved in RNA processing and may function in a chaperone-like manner, facilitating the efficient association of RNA processing factors with their substrates. Component of the cytoplasmic LSM1-LSM7 complex, which is thought to be involved in mRNA degradation by activating the decapping step in the 5'-to-3' mRNA decay pathway. Component of the nuclear LSM2-LSM8 complex, which is involved in splicing of nuclear mRNAs. LSM2-LSM8 associates with multiple snRNP complexes containing the U6 snRNA (U4/U6 di-snRNP, spliceosomal U4/U6.U5 tri-snRNP, and free U6 snRNP). It binds directly to the 3'-terminal U-tract of U6 snRNA and plays a role in the biogenesis and stability of the U6 snRNP and U4/U6 snRNP complexes. LSM2-LSM8 probably also is involved degradation of nuclear pre-mRNA by targeting them for decapping, and in processing of pre-tRNAs, pre-rRNAs and U3 snoRNA (By similarity).</text>
</comment>
<comment type="subunit">
    <text evidence="1">Component of the heptameric LSM1-LSM7 complex, which consists of LSM1, LSM2, LSM3, LSM4, LSM5, LSM6 and LSM7. Component of the heptameric LSM2-LSM8 complex, which consists of LSM2, LSM3, LSM4, LSM5, LSM6, LSM7 and LSM8. The LSm subunits form a seven-membered ring structure with a doughnut shape (By similarity).</text>
</comment>
<comment type="subcellular location">
    <subcellularLocation>
        <location evidence="1">Cytoplasm</location>
    </subcellularLocation>
    <subcellularLocation>
        <location evidence="1">Nucleus</location>
    </subcellularLocation>
</comment>
<comment type="similarity">
    <text evidence="3">Belongs to the snRNP Sm proteins family. SmF/LSm6 subfamily.</text>
</comment>
<keyword id="KW-0963">Cytoplasm</keyword>
<keyword id="KW-0507">mRNA processing</keyword>
<keyword id="KW-0508">mRNA splicing</keyword>
<keyword id="KW-0539">Nucleus</keyword>
<keyword id="KW-0687">Ribonucleoprotein</keyword>
<keyword id="KW-0694">RNA-binding</keyword>
<keyword id="KW-0698">rRNA processing</keyword>
<keyword id="KW-0747">Spliceosome</keyword>
<keyword id="KW-0819">tRNA processing</keyword>
<reference key="1">
    <citation type="journal article" date="2005" name="Science">
        <title>The genome of the basidiomycetous yeast and human pathogen Cryptococcus neoformans.</title>
        <authorList>
            <person name="Loftus B.J."/>
            <person name="Fung E."/>
            <person name="Roncaglia P."/>
            <person name="Rowley D."/>
            <person name="Amedeo P."/>
            <person name="Bruno D."/>
            <person name="Vamathevan J."/>
            <person name="Miranda M."/>
            <person name="Anderson I.J."/>
            <person name="Fraser J.A."/>
            <person name="Allen J.E."/>
            <person name="Bosdet I.E."/>
            <person name="Brent M.R."/>
            <person name="Chiu R."/>
            <person name="Doering T.L."/>
            <person name="Donlin M.J."/>
            <person name="D'Souza C.A."/>
            <person name="Fox D.S."/>
            <person name="Grinberg V."/>
            <person name="Fu J."/>
            <person name="Fukushima M."/>
            <person name="Haas B.J."/>
            <person name="Huang J.C."/>
            <person name="Janbon G."/>
            <person name="Jones S.J.M."/>
            <person name="Koo H.L."/>
            <person name="Krzywinski M.I."/>
            <person name="Kwon-Chung K.J."/>
            <person name="Lengeler K.B."/>
            <person name="Maiti R."/>
            <person name="Marra M.A."/>
            <person name="Marra R.E."/>
            <person name="Mathewson C.A."/>
            <person name="Mitchell T.G."/>
            <person name="Pertea M."/>
            <person name="Riggs F.R."/>
            <person name="Salzberg S.L."/>
            <person name="Schein J.E."/>
            <person name="Shvartsbeyn A."/>
            <person name="Shin H."/>
            <person name="Shumway M."/>
            <person name="Specht C.A."/>
            <person name="Suh B.B."/>
            <person name="Tenney A."/>
            <person name="Utterback T.R."/>
            <person name="Wickes B.L."/>
            <person name="Wortman J.R."/>
            <person name="Wye N.H."/>
            <person name="Kronstad J.W."/>
            <person name="Lodge J.K."/>
            <person name="Heitman J."/>
            <person name="Davis R.W."/>
            <person name="Fraser C.M."/>
            <person name="Hyman R.W."/>
        </authorList>
    </citation>
    <scope>NUCLEOTIDE SEQUENCE [LARGE SCALE GENOMIC DNA]</scope>
    <source>
        <strain>B-3501A</strain>
    </source>
</reference>
<feature type="chain" id="PRO_0000410274" description="U6 snRNA-associated Sm-like protein LSm6">
    <location>
        <begin position="1"/>
        <end position="88"/>
    </location>
</feature>
<feature type="domain" description="Sm" evidence="2">
    <location>
        <begin position="16"/>
        <end position="88"/>
    </location>
</feature>
<dbReference type="EMBL" id="AAEY01000066">
    <property type="protein sequence ID" value="EAL17319.1"/>
    <property type="molecule type" value="Genomic_DNA"/>
</dbReference>
<dbReference type="RefSeq" id="XP_771966.1">
    <property type="nucleotide sequence ID" value="XM_766873.1"/>
</dbReference>
<dbReference type="SMR" id="P0CR25"/>
<dbReference type="EnsemblFungi" id="AAW47104">
    <property type="protein sequence ID" value="AAW47104"/>
    <property type="gene ID" value="CNN01500"/>
</dbReference>
<dbReference type="GeneID" id="4939757"/>
<dbReference type="KEGG" id="cnb:CNBN1460"/>
<dbReference type="VEuPathDB" id="FungiDB:CNBN1460"/>
<dbReference type="HOGENOM" id="CLU_076902_7_2_1"/>
<dbReference type="OrthoDB" id="748at5206"/>
<dbReference type="GO" id="GO:0005730">
    <property type="term" value="C:nucleolus"/>
    <property type="evidence" value="ECO:0007669"/>
    <property type="project" value="TreeGrafter"/>
</dbReference>
<dbReference type="GO" id="GO:0000932">
    <property type="term" value="C:P-body"/>
    <property type="evidence" value="ECO:0007669"/>
    <property type="project" value="TreeGrafter"/>
</dbReference>
<dbReference type="GO" id="GO:0005732">
    <property type="term" value="C:sno(s)RNA-containing ribonucleoprotein complex"/>
    <property type="evidence" value="ECO:0007669"/>
    <property type="project" value="TreeGrafter"/>
</dbReference>
<dbReference type="GO" id="GO:0005681">
    <property type="term" value="C:spliceosomal complex"/>
    <property type="evidence" value="ECO:0007669"/>
    <property type="project" value="UniProtKB-KW"/>
</dbReference>
<dbReference type="GO" id="GO:0046540">
    <property type="term" value="C:U4/U6 x U5 tri-snRNP complex"/>
    <property type="evidence" value="ECO:0007669"/>
    <property type="project" value="TreeGrafter"/>
</dbReference>
<dbReference type="GO" id="GO:0005688">
    <property type="term" value="C:U6 snRNP"/>
    <property type="evidence" value="ECO:0007669"/>
    <property type="project" value="TreeGrafter"/>
</dbReference>
<dbReference type="GO" id="GO:0003723">
    <property type="term" value="F:RNA binding"/>
    <property type="evidence" value="ECO:0007669"/>
    <property type="project" value="UniProtKB-KW"/>
</dbReference>
<dbReference type="GO" id="GO:0030490">
    <property type="term" value="P:maturation of SSU-rRNA"/>
    <property type="evidence" value="ECO:0007669"/>
    <property type="project" value="TreeGrafter"/>
</dbReference>
<dbReference type="GO" id="GO:0000398">
    <property type="term" value="P:mRNA splicing, via spliceosome"/>
    <property type="evidence" value="ECO:0007669"/>
    <property type="project" value="InterPro"/>
</dbReference>
<dbReference type="GO" id="GO:0008033">
    <property type="term" value="P:tRNA processing"/>
    <property type="evidence" value="ECO:0007669"/>
    <property type="project" value="UniProtKB-KW"/>
</dbReference>
<dbReference type="CDD" id="cd01726">
    <property type="entry name" value="LSm6"/>
    <property type="match status" value="1"/>
</dbReference>
<dbReference type="FunFam" id="2.30.30.100:FF:000044">
    <property type="entry name" value="Probable U6 snRNA-associated Sm-like protein LSm6"/>
    <property type="match status" value="1"/>
</dbReference>
<dbReference type="Gene3D" id="2.30.30.100">
    <property type="match status" value="1"/>
</dbReference>
<dbReference type="InterPro" id="IPR016487">
    <property type="entry name" value="Lsm6/sSmF"/>
</dbReference>
<dbReference type="InterPro" id="IPR010920">
    <property type="entry name" value="LSM_dom_sf"/>
</dbReference>
<dbReference type="InterPro" id="IPR047575">
    <property type="entry name" value="Sm"/>
</dbReference>
<dbReference type="InterPro" id="IPR001163">
    <property type="entry name" value="Sm_dom_euk/arc"/>
</dbReference>
<dbReference type="PANTHER" id="PTHR11021">
    <property type="entry name" value="SMALL NUCLEAR RIBONUCLEOPROTEIN F SNRNP-F"/>
    <property type="match status" value="1"/>
</dbReference>
<dbReference type="PANTHER" id="PTHR11021:SF1">
    <property type="entry name" value="U6 SNRNA-ASSOCIATED SM-LIKE PROTEIN LSM6"/>
    <property type="match status" value="1"/>
</dbReference>
<dbReference type="Pfam" id="PF01423">
    <property type="entry name" value="LSM"/>
    <property type="match status" value="1"/>
</dbReference>
<dbReference type="SMART" id="SM00651">
    <property type="entry name" value="Sm"/>
    <property type="match status" value="1"/>
</dbReference>
<dbReference type="SUPFAM" id="SSF50182">
    <property type="entry name" value="Sm-like ribonucleoproteins"/>
    <property type="match status" value="1"/>
</dbReference>
<dbReference type="PROSITE" id="PS52002">
    <property type="entry name" value="SM"/>
    <property type="match status" value="1"/>
</dbReference>
<accession>P0CR25</accession>
<accession>Q55HH4</accession>
<accession>Q5K712</accession>
<organism>
    <name type="scientific">Cryptococcus neoformans var. neoformans serotype D (strain B-3501A)</name>
    <name type="common">Filobasidiella neoformans</name>
    <dbReference type="NCBI Taxonomy" id="283643"/>
    <lineage>
        <taxon>Eukaryota</taxon>
        <taxon>Fungi</taxon>
        <taxon>Dikarya</taxon>
        <taxon>Basidiomycota</taxon>
        <taxon>Agaricomycotina</taxon>
        <taxon>Tremellomycetes</taxon>
        <taxon>Tremellales</taxon>
        <taxon>Cryptococcaceae</taxon>
        <taxon>Cryptococcus</taxon>
        <taxon>Cryptococcus neoformans species complex</taxon>
    </lineage>
</organism>
<name>LSM6_CRYNB</name>
<protein>
    <recommendedName>
        <fullName>U6 snRNA-associated Sm-like protein LSm6</fullName>
    </recommendedName>
</protein>
<gene>
    <name type="primary">LSM6</name>
    <name type="ordered locus">CNBN1460</name>
</gene>
<evidence type="ECO:0000250" key="1"/>
<evidence type="ECO:0000255" key="2">
    <source>
        <dbReference type="PROSITE-ProRule" id="PRU01346"/>
    </source>
</evidence>
<evidence type="ECO:0000305" key="3"/>